<dbReference type="EMBL" id="CP000026">
    <property type="protein sequence ID" value="AAV78812.1"/>
    <property type="molecule type" value="Genomic_DNA"/>
</dbReference>
<dbReference type="RefSeq" id="WP_000091706.1">
    <property type="nucleotide sequence ID" value="NC_006511.1"/>
</dbReference>
<dbReference type="SMR" id="Q5PMM1"/>
<dbReference type="KEGG" id="spt:SPA2974"/>
<dbReference type="HOGENOM" id="CLU_170994_0_0_6"/>
<dbReference type="Proteomes" id="UP000008185">
    <property type="component" value="Chromosome"/>
</dbReference>
<dbReference type="GO" id="GO:0005829">
    <property type="term" value="C:cytosol"/>
    <property type="evidence" value="ECO:0007669"/>
    <property type="project" value="TreeGrafter"/>
</dbReference>
<dbReference type="GO" id="GO:0005506">
    <property type="term" value="F:iron ion binding"/>
    <property type="evidence" value="ECO:0007669"/>
    <property type="project" value="UniProtKB-UniRule"/>
</dbReference>
<dbReference type="GO" id="GO:0034599">
    <property type="term" value="P:cellular response to oxidative stress"/>
    <property type="evidence" value="ECO:0007669"/>
    <property type="project" value="TreeGrafter"/>
</dbReference>
<dbReference type="FunFam" id="1.10.3880.10:FF:000001">
    <property type="entry name" value="Probable Fe(2+)-trafficking protein"/>
    <property type="match status" value="1"/>
</dbReference>
<dbReference type="Gene3D" id="1.10.3880.10">
    <property type="entry name" value="Fe(II) trafficking protein YggX"/>
    <property type="match status" value="1"/>
</dbReference>
<dbReference type="HAMAP" id="MF_00686">
    <property type="entry name" value="Fe_traffic_YggX"/>
    <property type="match status" value="1"/>
</dbReference>
<dbReference type="InterPro" id="IPR007457">
    <property type="entry name" value="Fe_traffick_prot_YggX"/>
</dbReference>
<dbReference type="InterPro" id="IPR036766">
    <property type="entry name" value="Fe_traffick_prot_YggX_sf"/>
</dbReference>
<dbReference type="NCBIfam" id="NF003817">
    <property type="entry name" value="PRK05408.1"/>
    <property type="match status" value="1"/>
</dbReference>
<dbReference type="PANTHER" id="PTHR36965">
    <property type="entry name" value="FE(2+)-TRAFFICKING PROTEIN-RELATED"/>
    <property type="match status" value="1"/>
</dbReference>
<dbReference type="PANTHER" id="PTHR36965:SF1">
    <property type="entry name" value="FE(2+)-TRAFFICKING PROTEIN-RELATED"/>
    <property type="match status" value="1"/>
</dbReference>
<dbReference type="Pfam" id="PF04362">
    <property type="entry name" value="Iron_traffic"/>
    <property type="match status" value="1"/>
</dbReference>
<dbReference type="PIRSF" id="PIRSF029827">
    <property type="entry name" value="Fe_traffic_YggX"/>
    <property type="match status" value="1"/>
</dbReference>
<dbReference type="SUPFAM" id="SSF111148">
    <property type="entry name" value="YggX-like"/>
    <property type="match status" value="1"/>
</dbReference>
<protein>
    <recommendedName>
        <fullName evidence="2">Probable Fe(2+)-trafficking protein</fullName>
    </recommendedName>
</protein>
<reference key="1">
    <citation type="journal article" date="2004" name="Nat. Genet.">
        <title>Comparison of genome degradation in Paratyphi A and Typhi, human-restricted serovars of Salmonella enterica that cause typhoid.</title>
        <authorList>
            <person name="McClelland M."/>
            <person name="Sanderson K.E."/>
            <person name="Clifton S.W."/>
            <person name="Latreille P."/>
            <person name="Porwollik S."/>
            <person name="Sabo A."/>
            <person name="Meyer R."/>
            <person name="Bieri T."/>
            <person name="Ozersky P."/>
            <person name="McLellan M."/>
            <person name="Harkins C.R."/>
            <person name="Wang C."/>
            <person name="Nguyen C."/>
            <person name="Berghoff A."/>
            <person name="Elliott G."/>
            <person name="Kohlberg S."/>
            <person name="Strong C."/>
            <person name="Du F."/>
            <person name="Carter J."/>
            <person name="Kremizki C."/>
            <person name="Layman D."/>
            <person name="Leonard S."/>
            <person name="Sun H."/>
            <person name="Fulton L."/>
            <person name="Nash W."/>
            <person name="Miner T."/>
            <person name="Minx P."/>
            <person name="Delehaunty K."/>
            <person name="Fronick C."/>
            <person name="Magrini V."/>
            <person name="Nhan M."/>
            <person name="Warren W."/>
            <person name="Florea L."/>
            <person name="Spieth J."/>
            <person name="Wilson R.K."/>
        </authorList>
    </citation>
    <scope>NUCLEOTIDE SEQUENCE [LARGE SCALE GENOMIC DNA]</scope>
    <source>
        <strain>ATCC 9150 / SARB42</strain>
    </source>
</reference>
<comment type="function">
    <text evidence="2">Could be a mediator in iron transactions between iron acquisition and iron-requiring processes, such as synthesis and/or repair of Fe-S clusters in biosynthetic enzymes.</text>
</comment>
<comment type="subunit">
    <text evidence="2">Monomer.</text>
</comment>
<comment type="similarity">
    <text evidence="2">Belongs to the Fe(2+)-trafficking protein family.</text>
</comment>
<proteinExistence type="inferred from homology"/>
<keyword id="KW-0408">Iron</keyword>
<organism>
    <name type="scientific">Salmonella paratyphi A (strain ATCC 9150 / SARB42)</name>
    <dbReference type="NCBI Taxonomy" id="295319"/>
    <lineage>
        <taxon>Bacteria</taxon>
        <taxon>Pseudomonadati</taxon>
        <taxon>Pseudomonadota</taxon>
        <taxon>Gammaproteobacteria</taxon>
        <taxon>Enterobacterales</taxon>
        <taxon>Enterobacteriaceae</taxon>
        <taxon>Salmonella</taxon>
    </lineage>
</organism>
<gene>
    <name evidence="2" type="primary">yggX</name>
    <name type="ordered locus">SPA2974</name>
</gene>
<name>FETP_SALPA</name>
<accession>Q5PMM1</accession>
<sequence length="91" mass="10899">MSRTIFCTYLQRDAEGQDFQLYPGELGKRIYNEISKDAWAQWQHKQTMLINEKKLNMMNAEHRKLLEQEMVSFLFEGKDVHIEGYTPEDKK</sequence>
<feature type="initiator methionine" description="Removed" evidence="1">
    <location>
        <position position="1"/>
    </location>
</feature>
<feature type="chain" id="PRO_0000214503" description="Probable Fe(2+)-trafficking protein">
    <location>
        <begin position="2"/>
        <end position="91"/>
    </location>
</feature>
<evidence type="ECO:0000250" key="1"/>
<evidence type="ECO:0000255" key="2">
    <source>
        <dbReference type="HAMAP-Rule" id="MF_00686"/>
    </source>
</evidence>